<accession>Q8ZIM6</accession>
<accession>Q0WJJ7</accession>
<accession>Q74Q12</accession>
<accession>Q7CG76</accession>
<dbReference type="EMBL" id="AL590842">
    <property type="protein sequence ID" value="CAL19148.1"/>
    <property type="molecule type" value="Genomic_DNA"/>
</dbReference>
<dbReference type="EMBL" id="AE009952">
    <property type="protein sequence ID" value="AAM87253.1"/>
    <property type="molecule type" value="Genomic_DNA"/>
</dbReference>
<dbReference type="EMBL" id="AE017042">
    <property type="protein sequence ID" value="AAS63859.1"/>
    <property type="molecule type" value="Genomic_DNA"/>
</dbReference>
<dbReference type="PIR" id="AB0058">
    <property type="entry name" value="AB0058"/>
</dbReference>
<dbReference type="RefSeq" id="WP_002209249.1">
    <property type="nucleotide sequence ID" value="NZ_WUCM01000002.1"/>
</dbReference>
<dbReference type="RefSeq" id="YP_002345541.1">
    <property type="nucleotide sequence ID" value="NC_003143.1"/>
</dbReference>
<dbReference type="SMR" id="Q8ZIM6"/>
<dbReference type="STRING" id="214092.YPO0469"/>
<dbReference type="PaxDb" id="214092-YPO0469"/>
<dbReference type="EnsemblBacteria" id="AAS63859">
    <property type="protein sequence ID" value="AAS63859"/>
    <property type="gene ID" value="YP_3711"/>
</dbReference>
<dbReference type="GeneID" id="57974140"/>
<dbReference type="KEGG" id="ype:YPO0469"/>
<dbReference type="KEGG" id="ypk:y3705"/>
<dbReference type="KEGG" id="ypm:YP_3711"/>
<dbReference type="PATRIC" id="fig|214092.21.peg.716"/>
<dbReference type="eggNOG" id="COG0484">
    <property type="taxonomic scope" value="Bacteria"/>
</dbReference>
<dbReference type="HOGENOM" id="CLU_017633_0_7_6"/>
<dbReference type="OMA" id="MATDYYA"/>
<dbReference type="OrthoDB" id="9779889at2"/>
<dbReference type="Proteomes" id="UP000000815">
    <property type="component" value="Chromosome"/>
</dbReference>
<dbReference type="Proteomes" id="UP000001019">
    <property type="component" value="Chromosome"/>
</dbReference>
<dbReference type="Proteomes" id="UP000002490">
    <property type="component" value="Chromosome"/>
</dbReference>
<dbReference type="GO" id="GO:0005737">
    <property type="term" value="C:cytoplasm"/>
    <property type="evidence" value="ECO:0000318"/>
    <property type="project" value="GO_Central"/>
</dbReference>
<dbReference type="GO" id="GO:0005524">
    <property type="term" value="F:ATP binding"/>
    <property type="evidence" value="ECO:0007669"/>
    <property type="project" value="InterPro"/>
</dbReference>
<dbReference type="GO" id="GO:0031072">
    <property type="term" value="F:heat shock protein binding"/>
    <property type="evidence" value="ECO:0007669"/>
    <property type="project" value="InterPro"/>
</dbReference>
<dbReference type="GO" id="GO:0051082">
    <property type="term" value="F:unfolded protein binding"/>
    <property type="evidence" value="ECO:0000318"/>
    <property type="project" value="GO_Central"/>
</dbReference>
<dbReference type="GO" id="GO:0008270">
    <property type="term" value="F:zinc ion binding"/>
    <property type="evidence" value="ECO:0007669"/>
    <property type="project" value="UniProtKB-UniRule"/>
</dbReference>
<dbReference type="GO" id="GO:0051085">
    <property type="term" value="P:chaperone cofactor-dependent protein refolding"/>
    <property type="evidence" value="ECO:0000318"/>
    <property type="project" value="GO_Central"/>
</dbReference>
<dbReference type="GO" id="GO:0006260">
    <property type="term" value="P:DNA replication"/>
    <property type="evidence" value="ECO:0007669"/>
    <property type="project" value="UniProtKB-KW"/>
</dbReference>
<dbReference type="GO" id="GO:0042026">
    <property type="term" value="P:protein refolding"/>
    <property type="evidence" value="ECO:0000318"/>
    <property type="project" value="GO_Central"/>
</dbReference>
<dbReference type="GO" id="GO:0009408">
    <property type="term" value="P:response to heat"/>
    <property type="evidence" value="ECO:0007669"/>
    <property type="project" value="InterPro"/>
</dbReference>
<dbReference type="CDD" id="cd06257">
    <property type="entry name" value="DnaJ"/>
    <property type="match status" value="1"/>
</dbReference>
<dbReference type="CDD" id="cd10747">
    <property type="entry name" value="DnaJ_C"/>
    <property type="match status" value="1"/>
</dbReference>
<dbReference type="CDD" id="cd10719">
    <property type="entry name" value="DnaJ_zf"/>
    <property type="match status" value="1"/>
</dbReference>
<dbReference type="FunFam" id="1.10.287.110:FF:000003">
    <property type="entry name" value="Molecular chaperone DnaJ"/>
    <property type="match status" value="1"/>
</dbReference>
<dbReference type="FunFam" id="2.10.230.10:FF:000002">
    <property type="entry name" value="Molecular chaperone DnaJ"/>
    <property type="match status" value="1"/>
</dbReference>
<dbReference type="FunFam" id="2.60.260.20:FF:000004">
    <property type="entry name" value="Molecular chaperone DnaJ"/>
    <property type="match status" value="1"/>
</dbReference>
<dbReference type="Gene3D" id="1.10.287.110">
    <property type="entry name" value="DnaJ domain"/>
    <property type="match status" value="1"/>
</dbReference>
<dbReference type="Gene3D" id="2.10.230.10">
    <property type="entry name" value="Heat shock protein DnaJ, cysteine-rich domain"/>
    <property type="match status" value="1"/>
</dbReference>
<dbReference type="Gene3D" id="2.60.260.20">
    <property type="entry name" value="Urease metallochaperone UreE, N-terminal domain"/>
    <property type="match status" value="2"/>
</dbReference>
<dbReference type="HAMAP" id="MF_01152">
    <property type="entry name" value="DnaJ"/>
    <property type="match status" value="1"/>
</dbReference>
<dbReference type="InterPro" id="IPR012724">
    <property type="entry name" value="DnaJ"/>
</dbReference>
<dbReference type="InterPro" id="IPR002939">
    <property type="entry name" value="DnaJ_C"/>
</dbReference>
<dbReference type="InterPro" id="IPR001623">
    <property type="entry name" value="DnaJ_domain"/>
</dbReference>
<dbReference type="InterPro" id="IPR018253">
    <property type="entry name" value="DnaJ_domain_CS"/>
</dbReference>
<dbReference type="InterPro" id="IPR008971">
    <property type="entry name" value="HSP40/DnaJ_pept-bd"/>
</dbReference>
<dbReference type="InterPro" id="IPR001305">
    <property type="entry name" value="HSP_DnaJ_Cys-rich_dom"/>
</dbReference>
<dbReference type="InterPro" id="IPR036410">
    <property type="entry name" value="HSP_DnaJ_Cys-rich_dom_sf"/>
</dbReference>
<dbReference type="InterPro" id="IPR036869">
    <property type="entry name" value="J_dom_sf"/>
</dbReference>
<dbReference type="NCBIfam" id="TIGR02349">
    <property type="entry name" value="DnaJ_bact"/>
    <property type="match status" value="1"/>
</dbReference>
<dbReference type="NCBIfam" id="NF008035">
    <property type="entry name" value="PRK10767.1"/>
    <property type="match status" value="1"/>
</dbReference>
<dbReference type="PANTHER" id="PTHR43096:SF48">
    <property type="entry name" value="CHAPERONE PROTEIN DNAJ"/>
    <property type="match status" value="1"/>
</dbReference>
<dbReference type="PANTHER" id="PTHR43096">
    <property type="entry name" value="DNAJ HOMOLOG 1, MITOCHONDRIAL-RELATED"/>
    <property type="match status" value="1"/>
</dbReference>
<dbReference type="Pfam" id="PF00226">
    <property type="entry name" value="DnaJ"/>
    <property type="match status" value="1"/>
</dbReference>
<dbReference type="Pfam" id="PF01556">
    <property type="entry name" value="DnaJ_C"/>
    <property type="match status" value="1"/>
</dbReference>
<dbReference type="Pfam" id="PF00684">
    <property type="entry name" value="DnaJ_CXXCXGXG"/>
    <property type="match status" value="1"/>
</dbReference>
<dbReference type="PRINTS" id="PR00625">
    <property type="entry name" value="JDOMAIN"/>
</dbReference>
<dbReference type="SMART" id="SM00271">
    <property type="entry name" value="DnaJ"/>
    <property type="match status" value="1"/>
</dbReference>
<dbReference type="SUPFAM" id="SSF46565">
    <property type="entry name" value="Chaperone J-domain"/>
    <property type="match status" value="1"/>
</dbReference>
<dbReference type="SUPFAM" id="SSF57938">
    <property type="entry name" value="DnaJ/Hsp40 cysteine-rich domain"/>
    <property type="match status" value="1"/>
</dbReference>
<dbReference type="SUPFAM" id="SSF49493">
    <property type="entry name" value="HSP40/DnaJ peptide-binding domain"/>
    <property type="match status" value="2"/>
</dbReference>
<dbReference type="PROSITE" id="PS00636">
    <property type="entry name" value="DNAJ_1"/>
    <property type="match status" value="1"/>
</dbReference>
<dbReference type="PROSITE" id="PS50076">
    <property type="entry name" value="DNAJ_2"/>
    <property type="match status" value="1"/>
</dbReference>
<dbReference type="PROSITE" id="PS51188">
    <property type="entry name" value="ZF_CR"/>
    <property type="match status" value="1"/>
</dbReference>
<protein>
    <recommendedName>
        <fullName evidence="1">Chaperone protein DnaJ</fullName>
    </recommendedName>
</protein>
<proteinExistence type="inferred from homology"/>
<feature type="chain" id="PRO_0000070942" description="Chaperone protein DnaJ">
    <location>
        <begin position="1"/>
        <end position="379"/>
    </location>
</feature>
<feature type="domain" description="J" evidence="1">
    <location>
        <begin position="5"/>
        <end position="70"/>
    </location>
</feature>
<feature type="repeat" description="CXXCXGXG motif">
    <location>
        <begin position="147"/>
        <end position="154"/>
    </location>
</feature>
<feature type="repeat" description="CXXCXGXG motif">
    <location>
        <begin position="164"/>
        <end position="171"/>
    </location>
</feature>
<feature type="repeat" description="CXXCXGXG motif">
    <location>
        <begin position="186"/>
        <end position="193"/>
    </location>
</feature>
<feature type="repeat" description="CXXCXGXG motif">
    <location>
        <begin position="200"/>
        <end position="207"/>
    </location>
</feature>
<feature type="zinc finger region" description="CR-type" evidence="1">
    <location>
        <begin position="134"/>
        <end position="212"/>
    </location>
</feature>
<feature type="binding site" evidence="1">
    <location>
        <position position="147"/>
    </location>
    <ligand>
        <name>Zn(2+)</name>
        <dbReference type="ChEBI" id="CHEBI:29105"/>
        <label>1</label>
    </ligand>
</feature>
<feature type="binding site" evidence="1">
    <location>
        <position position="150"/>
    </location>
    <ligand>
        <name>Zn(2+)</name>
        <dbReference type="ChEBI" id="CHEBI:29105"/>
        <label>1</label>
    </ligand>
</feature>
<feature type="binding site" evidence="1">
    <location>
        <position position="164"/>
    </location>
    <ligand>
        <name>Zn(2+)</name>
        <dbReference type="ChEBI" id="CHEBI:29105"/>
        <label>2</label>
    </ligand>
</feature>
<feature type="binding site" evidence="1">
    <location>
        <position position="167"/>
    </location>
    <ligand>
        <name>Zn(2+)</name>
        <dbReference type="ChEBI" id="CHEBI:29105"/>
        <label>2</label>
    </ligand>
</feature>
<feature type="binding site" evidence="1">
    <location>
        <position position="186"/>
    </location>
    <ligand>
        <name>Zn(2+)</name>
        <dbReference type="ChEBI" id="CHEBI:29105"/>
        <label>2</label>
    </ligand>
</feature>
<feature type="binding site" evidence="1">
    <location>
        <position position="189"/>
    </location>
    <ligand>
        <name>Zn(2+)</name>
        <dbReference type="ChEBI" id="CHEBI:29105"/>
        <label>2</label>
    </ligand>
</feature>
<feature type="binding site" evidence="1">
    <location>
        <position position="200"/>
    </location>
    <ligand>
        <name>Zn(2+)</name>
        <dbReference type="ChEBI" id="CHEBI:29105"/>
        <label>1</label>
    </ligand>
</feature>
<feature type="binding site" evidence="1">
    <location>
        <position position="203"/>
    </location>
    <ligand>
        <name>Zn(2+)</name>
        <dbReference type="ChEBI" id="CHEBI:29105"/>
        <label>1</label>
    </ligand>
</feature>
<sequence>MAKRDYYEVLGVSRDAEEREIKKAYKRLAMKFHPDRQSEDKNAEEKFKEAKEAYEILTDAQKRAAYDQYGHAAFEQGGMGGGGFGGGGGGADFSDIFGDVFGDIFGGGRRQQRASRGSDLRYNMDLTLEEAVRGVTKEIRIPTLDECDVCHGSGAKPGSSPVTCPTCHGAGQVQMRQGFFTVQQACPHCHGRGQIIKDPCNKCHGHGRVEKSKTLSVKIPAGVDTGDRIRLSGEGEAGEHGAPSGDLYVQVQVKAHPIFEREGNNLYCEVPINFAMAALGGEIEVPTLDGRVKLKIPAETQTGKMFRMRGKGVKSVRGGSQGDLLCRVVVETPVSLSEKQKQLLRELEESFVGAAGEKNSPRAKSFLDGVKKFFDDLTR</sequence>
<gene>
    <name evidence="1" type="primary">dnaJ</name>
    <name type="ordered locus">YPO0469</name>
    <name type="ordered locus">y3705</name>
    <name type="ordered locus">YP_3711</name>
</gene>
<evidence type="ECO:0000255" key="1">
    <source>
        <dbReference type="HAMAP-Rule" id="MF_01152"/>
    </source>
</evidence>
<name>DNAJ_YERPE</name>
<reference key="1">
    <citation type="journal article" date="2001" name="Nature">
        <title>Genome sequence of Yersinia pestis, the causative agent of plague.</title>
        <authorList>
            <person name="Parkhill J."/>
            <person name="Wren B.W."/>
            <person name="Thomson N.R."/>
            <person name="Titball R.W."/>
            <person name="Holden M.T.G."/>
            <person name="Prentice M.B."/>
            <person name="Sebaihia M."/>
            <person name="James K.D."/>
            <person name="Churcher C.M."/>
            <person name="Mungall K.L."/>
            <person name="Baker S."/>
            <person name="Basham D."/>
            <person name="Bentley S.D."/>
            <person name="Brooks K."/>
            <person name="Cerdeno-Tarraga A.-M."/>
            <person name="Chillingworth T."/>
            <person name="Cronin A."/>
            <person name="Davies R.M."/>
            <person name="Davis P."/>
            <person name="Dougan G."/>
            <person name="Feltwell T."/>
            <person name="Hamlin N."/>
            <person name="Holroyd S."/>
            <person name="Jagels K."/>
            <person name="Karlyshev A.V."/>
            <person name="Leather S."/>
            <person name="Moule S."/>
            <person name="Oyston P.C.F."/>
            <person name="Quail M.A."/>
            <person name="Rutherford K.M."/>
            <person name="Simmonds M."/>
            <person name="Skelton J."/>
            <person name="Stevens K."/>
            <person name="Whitehead S."/>
            <person name="Barrell B.G."/>
        </authorList>
    </citation>
    <scope>NUCLEOTIDE SEQUENCE [LARGE SCALE GENOMIC DNA]</scope>
    <source>
        <strain>CO-92 / Biovar Orientalis</strain>
    </source>
</reference>
<reference key="2">
    <citation type="journal article" date="2002" name="J. Bacteriol.">
        <title>Genome sequence of Yersinia pestis KIM.</title>
        <authorList>
            <person name="Deng W."/>
            <person name="Burland V."/>
            <person name="Plunkett G. III"/>
            <person name="Boutin A."/>
            <person name="Mayhew G.F."/>
            <person name="Liss P."/>
            <person name="Perna N.T."/>
            <person name="Rose D.J."/>
            <person name="Mau B."/>
            <person name="Zhou S."/>
            <person name="Schwartz D.C."/>
            <person name="Fetherston J.D."/>
            <person name="Lindler L.E."/>
            <person name="Brubaker R.R."/>
            <person name="Plano G.V."/>
            <person name="Straley S.C."/>
            <person name="McDonough K.A."/>
            <person name="Nilles M.L."/>
            <person name="Matson J.S."/>
            <person name="Blattner F.R."/>
            <person name="Perry R.D."/>
        </authorList>
    </citation>
    <scope>NUCLEOTIDE SEQUENCE [LARGE SCALE GENOMIC DNA]</scope>
    <source>
        <strain>KIM10+ / Biovar Mediaevalis</strain>
    </source>
</reference>
<reference key="3">
    <citation type="journal article" date="2004" name="DNA Res.">
        <title>Complete genome sequence of Yersinia pestis strain 91001, an isolate avirulent to humans.</title>
        <authorList>
            <person name="Song Y."/>
            <person name="Tong Z."/>
            <person name="Wang J."/>
            <person name="Wang L."/>
            <person name="Guo Z."/>
            <person name="Han Y."/>
            <person name="Zhang J."/>
            <person name="Pei D."/>
            <person name="Zhou D."/>
            <person name="Qin H."/>
            <person name="Pang X."/>
            <person name="Han Y."/>
            <person name="Zhai J."/>
            <person name="Li M."/>
            <person name="Cui B."/>
            <person name="Qi Z."/>
            <person name="Jin L."/>
            <person name="Dai R."/>
            <person name="Chen F."/>
            <person name="Li S."/>
            <person name="Ye C."/>
            <person name="Du Z."/>
            <person name="Lin W."/>
            <person name="Wang J."/>
            <person name="Yu J."/>
            <person name="Yang H."/>
            <person name="Wang J."/>
            <person name="Huang P."/>
            <person name="Yang R."/>
        </authorList>
    </citation>
    <scope>NUCLEOTIDE SEQUENCE [LARGE SCALE GENOMIC DNA]</scope>
    <source>
        <strain>91001 / Biovar Mediaevalis</strain>
    </source>
</reference>
<organism>
    <name type="scientific">Yersinia pestis</name>
    <dbReference type="NCBI Taxonomy" id="632"/>
    <lineage>
        <taxon>Bacteria</taxon>
        <taxon>Pseudomonadati</taxon>
        <taxon>Pseudomonadota</taxon>
        <taxon>Gammaproteobacteria</taxon>
        <taxon>Enterobacterales</taxon>
        <taxon>Yersiniaceae</taxon>
        <taxon>Yersinia</taxon>
    </lineage>
</organism>
<keyword id="KW-0143">Chaperone</keyword>
<keyword id="KW-0963">Cytoplasm</keyword>
<keyword id="KW-0235">DNA replication</keyword>
<keyword id="KW-0479">Metal-binding</keyword>
<keyword id="KW-1185">Reference proteome</keyword>
<keyword id="KW-0677">Repeat</keyword>
<keyword id="KW-0346">Stress response</keyword>
<keyword id="KW-0862">Zinc</keyword>
<keyword id="KW-0863">Zinc-finger</keyword>
<comment type="function">
    <text evidence="1">Participates actively in the response to hyperosmotic and heat shock by preventing the aggregation of stress-denatured proteins and by disaggregating proteins, also in an autonomous, DnaK-independent fashion. Unfolded proteins bind initially to DnaJ; upon interaction with the DnaJ-bound protein, DnaK hydrolyzes its bound ATP, resulting in the formation of a stable complex. GrpE releases ADP from DnaK; ATP binding to DnaK triggers the release of the substrate protein, thus completing the reaction cycle. Several rounds of ATP-dependent interactions between DnaJ, DnaK and GrpE are required for fully efficient folding. Also involved, together with DnaK and GrpE, in the DNA replication of plasmids through activation of initiation proteins.</text>
</comment>
<comment type="cofactor">
    <cofactor evidence="1">
        <name>Zn(2+)</name>
        <dbReference type="ChEBI" id="CHEBI:29105"/>
    </cofactor>
    <text evidence="1">Binds 2 Zn(2+) ions per monomer.</text>
</comment>
<comment type="subunit">
    <text evidence="1">Homodimer.</text>
</comment>
<comment type="subcellular location">
    <subcellularLocation>
        <location evidence="1">Cytoplasm</location>
    </subcellularLocation>
</comment>
<comment type="domain">
    <text evidence="1">The J domain is necessary and sufficient to stimulate DnaK ATPase activity. Zinc center 1 plays an important role in the autonomous, DnaK-independent chaperone activity of DnaJ. Zinc center 2 is essential for interaction with DnaK and for DnaJ activity.</text>
</comment>
<comment type="similarity">
    <text evidence="1">Belongs to the DnaJ family.</text>
</comment>